<keyword id="KW-0227">DNA damage</keyword>
<keyword id="KW-0234">DNA repair</keyword>
<keyword id="KW-0235">DNA replication</keyword>
<keyword id="KW-0436">Ligase</keyword>
<keyword id="KW-0520">NAD</keyword>
<proteinExistence type="inferred from homology"/>
<accession>B5RG75</accession>
<name>LIGB_SALG2</name>
<sequence>MRLWKSMAWGILLWHSQSGALCPAWPPARAAEEITRLQQQLADWNDIYWKQGVSAVDDSVYDQLSARLVQWQRCVGQDVSSTPVSPPLNGTTMHPVAHTGVRKLADRQAVEQWMRGRSELWVQPKVDGVAVTLVYQNGKLTRAISRGNGLQGEDWTPKIRLIPSIPQTTQGALANAVLQGEIFLQREGHIQQRMGGMNARSKVAGMLMRQDNASALNSLGIFIWAWPDGPANMPERLSQLAKAGFSLTNKYTLAVKDASEVERARQSWLTSALPFVTDGVVIRMAKEPASQHWRPGQGDWLAAWKYPPVAQVAQVSAIQFSVGKSGKITVVASLVPVILDDKRVQRVNIDSVKRWEAWDIAPGDQILVSLAGQGIPRLDEVVWRSRERSKPVPPDSHFNSLTCFYASETCQEQFISRLVWLGSRSALGLDGMGEASWRALHQTHRFKHIFSWLALTSAQIANTPGFAKGKSEQIWRQFNLARRQSFTRWIMAMDIPLTQAALQASGDRSWEQLLMRTEQHWWQLPATGERRAGRVIDWRNNPQIKTLSRWLAAQHIPGFGS</sequence>
<comment type="function">
    <text evidence="1">Catalyzes the formation of phosphodiester linkages between 5'-phosphoryl and 3'-hydroxyl groups in double-stranded DNA using NAD as a coenzyme and as the energy source for the reaction.</text>
</comment>
<comment type="catalytic activity">
    <reaction evidence="1">
        <text>NAD(+) + (deoxyribonucleotide)n-3'-hydroxyl + 5'-phospho-(deoxyribonucleotide)m = (deoxyribonucleotide)n+m + AMP + beta-nicotinamide D-nucleotide.</text>
        <dbReference type="EC" id="6.5.1.2"/>
    </reaction>
</comment>
<comment type="similarity">
    <text evidence="1">Belongs to the NAD-dependent DNA ligase family. LigB subfamily.</text>
</comment>
<feature type="chain" id="PRO_1000147729" description="DNA ligase B">
    <location>
        <begin position="1"/>
        <end position="561"/>
    </location>
</feature>
<feature type="active site" description="N6-AMP-lysine intermediate" evidence="1">
    <location>
        <position position="125"/>
    </location>
</feature>
<protein>
    <recommendedName>
        <fullName evidence="1">DNA ligase B</fullName>
        <ecNumber evidence="1">6.5.1.2</ecNumber>
    </recommendedName>
    <alternativeName>
        <fullName evidence="1">Polydeoxyribonucleotide synthase [NAD(+)] B</fullName>
    </alternativeName>
</protein>
<organism>
    <name type="scientific">Salmonella gallinarum (strain 287/91 / NCTC 13346)</name>
    <dbReference type="NCBI Taxonomy" id="550538"/>
    <lineage>
        <taxon>Bacteria</taxon>
        <taxon>Pseudomonadati</taxon>
        <taxon>Pseudomonadota</taxon>
        <taxon>Gammaproteobacteria</taxon>
        <taxon>Enterobacterales</taxon>
        <taxon>Enterobacteriaceae</taxon>
        <taxon>Salmonella</taxon>
    </lineage>
</organism>
<dbReference type="EC" id="6.5.1.2" evidence="1"/>
<dbReference type="EMBL" id="AM933173">
    <property type="protein sequence ID" value="CAR39472.1"/>
    <property type="molecule type" value="Genomic_DNA"/>
</dbReference>
<dbReference type="RefSeq" id="WP_001241847.1">
    <property type="nucleotide sequence ID" value="NC_011274.1"/>
</dbReference>
<dbReference type="SMR" id="B5RG75"/>
<dbReference type="KEGG" id="seg:SG3692"/>
<dbReference type="HOGENOM" id="CLU_489786_0_0_6"/>
<dbReference type="Proteomes" id="UP000008321">
    <property type="component" value="Chromosome"/>
</dbReference>
<dbReference type="GO" id="GO:0003911">
    <property type="term" value="F:DNA ligase (NAD+) activity"/>
    <property type="evidence" value="ECO:0007669"/>
    <property type="project" value="UniProtKB-UniRule"/>
</dbReference>
<dbReference type="GO" id="GO:0006281">
    <property type="term" value="P:DNA repair"/>
    <property type="evidence" value="ECO:0007669"/>
    <property type="project" value="UniProtKB-KW"/>
</dbReference>
<dbReference type="GO" id="GO:0006260">
    <property type="term" value="P:DNA replication"/>
    <property type="evidence" value="ECO:0007669"/>
    <property type="project" value="UniProtKB-KW"/>
</dbReference>
<dbReference type="FunFam" id="1.10.287.610:FF:000003">
    <property type="entry name" value="DNA ligase B"/>
    <property type="match status" value="1"/>
</dbReference>
<dbReference type="FunFam" id="2.40.50.140:FF:000139">
    <property type="entry name" value="DNA ligase B"/>
    <property type="match status" value="1"/>
</dbReference>
<dbReference type="FunFam" id="3.30.470.30:FF:000007">
    <property type="entry name" value="DNA ligase B"/>
    <property type="match status" value="1"/>
</dbReference>
<dbReference type="Gene3D" id="1.10.150.20">
    <property type="entry name" value="5' to 3' exonuclease, C-terminal subdomain"/>
    <property type="match status" value="1"/>
</dbReference>
<dbReference type="Gene3D" id="3.30.470.30">
    <property type="entry name" value="DNA ligase/mRNA capping enzyme"/>
    <property type="match status" value="1"/>
</dbReference>
<dbReference type="Gene3D" id="1.10.287.610">
    <property type="entry name" value="Helix hairpin bin"/>
    <property type="match status" value="1"/>
</dbReference>
<dbReference type="Gene3D" id="2.40.50.140">
    <property type="entry name" value="Nucleic acid-binding proteins"/>
    <property type="match status" value="1"/>
</dbReference>
<dbReference type="HAMAP" id="MF_01587">
    <property type="entry name" value="DNA_ligase_B"/>
    <property type="match status" value="1"/>
</dbReference>
<dbReference type="InterPro" id="IPR018239">
    <property type="entry name" value="DNA_ligase_AS"/>
</dbReference>
<dbReference type="InterPro" id="IPR020923">
    <property type="entry name" value="DNA_ligase_B"/>
</dbReference>
<dbReference type="InterPro" id="IPR033136">
    <property type="entry name" value="DNA_ligase_CS"/>
</dbReference>
<dbReference type="InterPro" id="IPR013839">
    <property type="entry name" value="DNAligase_adenylation"/>
</dbReference>
<dbReference type="InterPro" id="IPR013840">
    <property type="entry name" value="DNAligase_N"/>
</dbReference>
<dbReference type="InterPro" id="IPR012340">
    <property type="entry name" value="NA-bd_OB-fold"/>
</dbReference>
<dbReference type="InterPro" id="IPR050326">
    <property type="entry name" value="NAD_dep_DNA_ligaseB"/>
</dbReference>
<dbReference type="InterPro" id="IPR004150">
    <property type="entry name" value="NAD_DNA_ligase_OB"/>
</dbReference>
<dbReference type="InterPro" id="IPR010994">
    <property type="entry name" value="RuvA_2-like"/>
</dbReference>
<dbReference type="NCBIfam" id="NF005987">
    <property type="entry name" value="PRK08097.1"/>
    <property type="match status" value="1"/>
</dbReference>
<dbReference type="PANTHER" id="PTHR47810">
    <property type="entry name" value="DNA LIGASE"/>
    <property type="match status" value="1"/>
</dbReference>
<dbReference type="PANTHER" id="PTHR47810:SF1">
    <property type="entry name" value="DNA LIGASE B"/>
    <property type="match status" value="1"/>
</dbReference>
<dbReference type="Pfam" id="PF01653">
    <property type="entry name" value="DNA_ligase_aden"/>
    <property type="match status" value="1"/>
</dbReference>
<dbReference type="Pfam" id="PF03120">
    <property type="entry name" value="DNA_ligase_OB"/>
    <property type="match status" value="1"/>
</dbReference>
<dbReference type="SMART" id="SM00532">
    <property type="entry name" value="LIGANc"/>
    <property type="match status" value="1"/>
</dbReference>
<dbReference type="SUPFAM" id="SSF56091">
    <property type="entry name" value="DNA ligase/mRNA capping enzyme, catalytic domain"/>
    <property type="match status" value="1"/>
</dbReference>
<dbReference type="SUPFAM" id="SSF50249">
    <property type="entry name" value="Nucleic acid-binding proteins"/>
    <property type="match status" value="1"/>
</dbReference>
<dbReference type="SUPFAM" id="SSF47781">
    <property type="entry name" value="RuvA domain 2-like"/>
    <property type="match status" value="1"/>
</dbReference>
<dbReference type="PROSITE" id="PS01055">
    <property type="entry name" value="DNA_LIGASE_N1"/>
    <property type="match status" value="1"/>
</dbReference>
<dbReference type="PROSITE" id="PS01056">
    <property type="entry name" value="DNA_LIGASE_N2"/>
    <property type="match status" value="1"/>
</dbReference>
<gene>
    <name evidence="1" type="primary">ligB</name>
    <name type="ordered locus">SG3692</name>
</gene>
<reference key="1">
    <citation type="journal article" date="2008" name="Genome Res.">
        <title>Comparative genome analysis of Salmonella enteritidis PT4 and Salmonella gallinarum 287/91 provides insights into evolutionary and host adaptation pathways.</title>
        <authorList>
            <person name="Thomson N.R."/>
            <person name="Clayton D.J."/>
            <person name="Windhorst D."/>
            <person name="Vernikos G."/>
            <person name="Davidson S."/>
            <person name="Churcher C."/>
            <person name="Quail M.A."/>
            <person name="Stevens M."/>
            <person name="Jones M.A."/>
            <person name="Watson M."/>
            <person name="Barron A."/>
            <person name="Layton A."/>
            <person name="Pickard D."/>
            <person name="Kingsley R.A."/>
            <person name="Bignell A."/>
            <person name="Clark L."/>
            <person name="Harris B."/>
            <person name="Ormond D."/>
            <person name="Abdellah Z."/>
            <person name="Brooks K."/>
            <person name="Cherevach I."/>
            <person name="Chillingworth T."/>
            <person name="Woodward J."/>
            <person name="Norberczak H."/>
            <person name="Lord A."/>
            <person name="Arrowsmith C."/>
            <person name="Jagels K."/>
            <person name="Moule S."/>
            <person name="Mungall K."/>
            <person name="Saunders M."/>
            <person name="Whitehead S."/>
            <person name="Chabalgoity J.A."/>
            <person name="Maskell D."/>
            <person name="Humphreys T."/>
            <person name="Roberts M."/>
            <person name="Barrow P.A."/>
            <person name="Dougan G."/>
            <person name="Parkhill J."/>
        </authorList>
    </citation>
    <scope>NUCLEOTIDE SEQUENCE [LARGE SCALE GENOMIC DNA]</scope>
    <source>
        <strain>287/91 / NCTC 13346</strain>
    </source>
</reference>
<evidence type="ECO:0000255" key="1">
    <source>
        <dbReference type="HAMAP-Rule" id="MF_01587"/>
    </source>
</evidence>